<keyword id="KW-0614">Plasmid</keyword>
<gene>
    <name type="primary">kleA</name>
    <name type="synonym">kcrA1</name>
</gene>
<feature type="chain" id="PRO_0000068366" description="Protein KleA">
    <location>
        <begin position="1"/>
        <end position="77"/>
    </location>
</feature>
<proteinExistence type="predicted"/>
<geneLocation type="plasmid">
    <name>IncP-alpha RK2</name>
</geneLocation>
<accession>P13964</accession>
<accession>Q52332</accession>
<organism>
    <name type="scientific">Escherichia coli</name>
    <dbReference type="NCBI Taxonomy" id="562"/>
    <lineage>
        <taxon>Bacteria</taxon>
        <taxon>Pseudomonadati</taxon>
        <taxon>Pseudomonadota</taxon>
        <taxon>Gammaproteobacteria</taxon>
        <taxon>Enterobacterales</taxon>
        <taxon>Enterobacteriaceae</taxon>
        <taxon>Escherichia</taxon>
    </lineage>
</organism>
<name>KLEA2_ECOLX</name>
<sequence>MKSKIMSWLDELPGAAATDFLARRDQIAALMEQAAELTRQAEELRHKAYLQGCTLEGEAKGHWSTQEVERAKARAGW</sequence>
<comment type="similarity">
    <text evidence="1">To E.coli KleC (kcrB1).</text>
</comment>
<evidence type="ECO:0000305" key="1"/>
<dbReference type="EMBL" id="X07248">
    <property type="protein sequence ID" value="CAA30233.1"/>
    <property type="molecule type" value="Genomic_DNA"/>
</dbReference>
<dbReference type="EMBL" id="L18919">
    <property type="protein sequence ID" value="AAA92765.1"/>
    <property type="molecule type" value="Genomic_DNA"/>
</dbReference>
<dbReference type="EMBL" id="M32794">
    <property type="protein sequence ID" value="AAA26410.1"/>
    <property type="molecule type" value="Genomic_DNA"/>
</dbReference>
<dbReference type="RefSeq" id="WP_011205839.1">
    <property type="nucleotide sequence ID" value="NZ_VMTS01000048.1"/>
</dbReference>
<dbReference type="SMR" id="P13964"/>
<dbReference type="InterPro" id="IPR035338">
    <property type="entry name" value="KleA/KleC-like"/>
</dbReference>
<dbReference type="Pfam" id="PF17383">
    <property type="entry name" value="kleA_kleC"/>
    <property type="match status" value="1"/>
</dbReference>
<protein>
    <recommendedName>
        <fullName>Protein KleA</fullName>
    </recommendedName>
    <alternativeName>
        <fullName>KcrA1 protein</fullName>
    </alternativeName>
</protein>
<reference key="1">
    <citation type="journal article" date="1988" name="Nucleic Acids Res.">
        <title>Gene regulation on broad host range plasmid RK2: identification of three novel operons whose transcription is repressed by both KorA and KorC.</title>
        <authorList>
            <person name="Thomas C.M."/>
            <person name="Ibbotson J.P."/>
            <person name="Wang N."/>
            <person name="Smith C.A."/>
            <person name="Tipping R."/>
            <person name="Loader N.M."/>
        </authorList>
    </citation>
    <scope>NUCLEOTIDE SEQUENCE [GENOMIC DNA]</scope>
</reference>
<reference key="2">
    <citation type="journal article" date="1993" name="J. Bacteriol.">
        <title>kil-kor regulon of promiscuous plasmid RK2: structure, products, and regulation of two operons that constitute the kilE locus.</title>
        <authorList>
            <person name="Kornacki J.A."/>
            <person name="Chang C.-H."/>
            <person name="Figurski D.H."/>
        </authorList>
    </citation>
    <scope>NUCLEOTIDE SEQUENCE [GENOMIC DNA]</scope>
</reference>
<reference key="3">
    <citation type="journal article" date="1990" name="J. Bacteriol.">
        <title>The kil-kor regulon of broad-host-range plasmid RK2: nucleotide sequence, polypeptide product, and expression of regulatory gene korC.</title>
        <authorList>
            <person name="Kornacki J.A."/>
            <person name="Burlage R.S."/>
            <person name="Figurski D.H."/>
        </authorList>
    </citation>
    <scope>NUCLEOTIDE SEQUENCE [GENOMIC DNA] OF 1-17</scope>
</reference>